<evidence type="ECO:0000255" key="1">
    <source>
        <dbReference type="HAMAP-Rule" id="MF_01114"/>
    </source>
</evidence>
<proteinExistence type="inferred from homology"/>
<keyword id="KW-0963">Cytoplasm</keyword>
<keyword id="KW-1185">Reference proteome</keyword>
<comment type="function">
    <text evidence="1">Modulates RecA activity.</text>
</comment>
<comment type="subcellular location">
    <subcellularLocation>
        <location evidence="1">Cytoplasm</location>
    </subcellularLocation>
</comment>
<comment type="similarity">
    <text evidence="1">Belongs to the RecX family.</text>
</comment>
<feature type="chain" id="PRO_1000065171" description="Regulatory protein RecX">
    <location>
        <begin position="1"/>
        <end position="165"/>
    </location>
</feature>
<sequence>MTDATPRRSAYSRLLDRAMRILAMRDHSEQELRRKLGAVLPGKNEEEQEQATPEDIEKVIAWCHEQHYLDDARFAERYIASRGRKGYGPQRIRQELQQKGISRNACDSAFADCEVDWEQQARDQAERKFGAPLPRTFPEKAKVQRFLLYRGYYMEDIQAIYRNFE</sequence>
<reference key="1">
    <citation type="journal article" date="2010" name="PLoS ONE">
        <title>Genome sequence of Cronobacter sakazakii BAA-894 and comparative genomic hybridization analysis with other Cronobacter species.</title>
        <authorList>
            <person name="Kucerova E."/>
            <person name="Clifton S.W."/>
            <person name="Xia X.Q."/>
            <person name="Long F."/>
            <person name="Porwollik S."/>
            <person name="Fulton L."/>
            <person name="Fronick C."/>
            <person name="Minx P."/>
            <person name="Kyung K."/>
            <person name="Warren W."/>
            <person name="Fulton R."/>
            <person name="Feng D."/>
            <person name="Wollam A."/>
            <person name="Shah N."/>
            <person name="Bhonagiri V."/>
            <person name="Nash W.E."/>
            <person name="Hallsworth-Pepin K."/>
            <person name="Wilson R.K."/>
            <person name="McClelland M."/>
            <person name="Forsythe S.J."/>
        </authorList>
    </citation>
    <scope>NUCLEOTIDE SEQUENCE [LARGE SCALE GENOMIC DNA]</scope>
    <source>
        <strain>ATCC BAA-894</strain>
    </source>
</reference>
<name>RECX_CROS8</name>
<gene>
    <name evidence="1" type="primary">recX</name>
    <name type="ordered locus">ESA_00568</name>
</gene>
<organism>
    <name type="scientific">Cronobacter sakazakii (strain ATCC BAA-894)</name>
    <name type="common">Enterobacter sakazakii</name>
    <dbReference type="NCBI Taxonomy" id="290339"/>
    <lineage>
        <taxon>Bacteria</taxon>
        <taxon>Pseudomonadati</taxon>
        <taxon>Pseudomonadota</taxon>
        <taxon>Gammaproteobacteria</taxon>
        <taxon>Enterobacterales</taxon>
        <taxon>Enterobacteriaceae</taxon>
        <taxon>Cronobacter</taxon>
    </lineage>
</organism>
<protein>
    <recommendedName>
        <fullName evidence="1">Regulatory protein RecX</fullName>
    </recommendedName>
</protein>
<dbReference type="EMBL" id="CP000783">
    <property type="protein sequence ID" value="ABU75858.1"/>
    <property type="molecule type" value="Genomic_DNA"/>
</dbReference>
<dbReference type="RefSeq" id="WP_012123946.1">
    <property type="nucleotide sequence ID" value="NC_009778.1"/>
</dbReference>
<dbReference type="SMR" id="A7MJ39"/>
<dbReference type="KEGG" id="esa:ESA_00568"/>
<dbReference type="PATRIC" id="fig|290339.8.peg.513"/>
<dbReference type="HOGENOM" id="CLU_066607_3_2_6"/>
<dbReference type="Proteomes" id="UP000000260">
    <property type="component" value="Chromosome"/>
</dbReference>
<dbReference type="GO" id="GO:0005737">
    <property type="term" value="C:cytoplasm"/>
    <property type="evidence" value="ECO:0007669"/>
    <property type="project" value="UniProtKB-SubCell"/>
</dbReference>
<dbReference type="GO" id="GO:0006282">
    <property type="term" value="P:regulation of DNA repair"/>
    <property type="evidence" value="ECO:0007669"/>
    <property type="project" value="UniProtKB-UniRule"/>
</dbReference>
<dbReference type="Gene3D" id="1.10.10.10">
    <property type="entry name" value="Winged helix-like DNA-binding domain superfamily/Winged helix DNA-binding domain"/>
    <property type="match status" value="3"/>
</dbReference>
<dbReference type="HAMAP" id="MF_01114">
    <property type="entry name" value="RecX"/>
    <property type="match status" value="1"/>
</dbReference>
<dbReference type="InterPro" id="IPR053926">
    <property type="entry name" value="RecX_HTH_1st"/>
</dbReference>
<dbReference type="InterPro" id="IPR053924">
    <property type="entry name" value="RecX_HTH_2nd"/>
</dbReference>
<dbReference type="InterPro" id="IPR053925">
    <property type="entry name" value="RecX_HTH_3rd"/>
</dbReference>
<dbReference type="InterPro" id="IPR003783">
    <property type="entry name" value="Regulatory_RecX"/>
</dbReference>
<dbReference type="InterPro" id="IPR036388">
    <property type="entry name" value="WH-like_DNA-bd_sf"/>
</dbReference>
<dbReference type="NCBIfam" id="NF001052">
    <property type="entry name" value="PRK00117.1-1"/>
    <property type="match status" value="1"/>
</dbReference>
<dbReference type="PANTHER" id="PTHR33602">
    <property type="entry name" value="REGULATORY PROTEIN RECX FAMILY PROTEIN"/>
    <property type="match status" value="1"/>
</dbReference>
<dbReference type="PANTHER" id="PTHR33602:SF1">
    <property type="entry name" value="REGULATORY PROTEIN RECX FAMILY PROTEIN"/>
    <property type="match status" value="1"/>
</dbReference>
<dbReference type="Pfam" id="PF21982">
    <property type="entry name" value="RecX_HTH1"/>
    <property type="match status" value="1"/>
</dbReference>
<dbReference type="Pfam" id="PF02631">
    <property type="entry name" value="RecX_HTH2"/>
    <property type="match status" value="1"/>
</dbReference>
<dbReference type="Pfam" id="PF21981">
    <property type="entry name" value="RecX_HTH3"/>
    <property type="match status" value="1"/>
</dbReference>
<accession>A7MJ39</accession>